<dbReference type="EC" id="2.4.1.18" evidence="2"/>
<dbReference type="EMBL" id="L08065">
    <property type="protein sequence ID" value="AAA18571.1"/>
    <property type="molecule type" value="mRNA"/>
</dbReference>
<dbReference type="PIR" id="T02981">
    <property type="entry name" value="T02981"/>
</dbReference>
<dbReference type="RefSeq" id="NP_001105316.1">
    <property type="nucleotide sequence ID" value="NM_001111846.2"/>
</dbReference>
<dbReference type="SMR" id="Q08047"/>
<dbReference type="STRING" id="4577.Q08047"/>
<dbReference type="CAZy" id="CBM48">
    <property type="family name" value="Carbohydrate-Binding Module Family 48"/>
</dbReference>
<dbReference type="CAZy" id="GH13">
    <property type="family name" value="Glycoside Hydrolase Family 13"/>
</dbReference>
<dbReference type="PaxDb" id="4577-GRMZM2G032628_P01"/>
<dbReference type="GeneID" id="542238"/>
<dbReference type="KEGG" id="zma:542238"/>
<dbReference type="MaizeGDB" id="63943"/>
<dbReference type="eggNOG" id="KOG0470">
    <property type="taxonomic scope" value="Eukaryota"/>
</dbReference>
<dbReference type="InParanoid" id="Q08047"/>
<dbReference type="OrthoDB" id="196493at2759"/>
<dbReference type="BRENDA" id="2.4.1.18">
    <property type="organism ID" value="6752"/>
</dbReference>
<dbReference type="UniPathway" id="UPA00152"/>
<dbReference type="Proteomes" id="UP000007305">
    <property type="component" value="Unplaced"/>
</dbReference>
<dbReference type="ExpressionAtlas" id="Q08047">
    <property type="expression patterns" value="baseline and differential"/>
</dbReference>
<dbReference type="GO" id="GO:0009501">
    <property type="term" value="C:amyloplast"/>
    <property type="evidence" value="ECO:0007669"/>
    <property type="project" value="UniProtKB-SubCell"/>
</dbReference>
<dbReference type="GO" id="GO:0009507">
    <property type="term" value="C:chloroplast"/>
    <property type="evidence" value="ECO:0007669"/>
    <property type="project" value="UniProtKB-SubCell"/>
</dbReference>
<dbReference type="GO" id="GO:0005737">
    <property type="term" value="C:cytoplasm"/>
    <property type="evidence" value="ECO:0000318"/>
    <property type="project" value="GO_Central"/>
</dbReference>
<dbReference type="GO" id="GO:0003844">
    <property type="term" value="F:1,4-alpha-glucan branching enzyme activity"/>
    <property type="evidence" value="ECO:0000318"/>
    <property type="project" value="GO_Central"/>
</dbReference>
<dbReference type="GO" id="GO:0043169">
    <property type="term" value="F:cation binding"/>
    <property type="evidence" value="ECO:0007669"/>
    <property type="project" value="InterPro"/>
</dbReference>
<dbReference type="GO" id="GO:0004553">
    <property type="term" value="F:hydrolase activity, hydrolyzing O-glycosyl compounds"/>
    <property type="evidence" value="ECO:0007669"/>
    <property type="project" value="InterPro"/>
</dbReference>
<dbReference type="GO" id="GO:0005978">
    <property type="term" value="P:glycogen biosynthetic process"/>
    <property type="evidence" value="ECO:0007669"/>
    <property type="project" value="InterPro"/>
</dbReference>
<dbReference type="GO" id="GO:0019252">
    <property type="term" value="P:starch biosynthetic process"/>
    <property type="evidence" value="ECO:0007669"/>
    <property type="project" value="UniProtKB-UniPathway"/>
</dbReference>
<dbReference type="GO" id="GO:0005982">
    <property type="term" value="P:starch metabolic process"/>
    <property type="evidence" value="ECO:0000318"/>
    <property type="project" value="GO_Central"/>
</dbReference>
<dbReference type="CDD" id="cd11321">
    <property type="entry name" value="AmyAc_bac_euk_BE"/>
    <property type="match status" value="1"/>
</dbReference>
<dbReference type="CDD" id="cd02854">
    <property type="entry name" value="E_set_GBE_euk_N"/>
    <property type="match status" value="1"/>
</dbReference>
<dbReference type="FunFam" id="3.20.20.80:FF:000001">
    <property type="entry name" value="1,4-alpha-glucan branching enzyme"/>
    <property type="match status" value="1"/>
</dbReference>
<dbReference type="FunFam" id="2.60.40.10:FF:000250">
    <property type="entry name" value="1,4-alpha-glucan-branching enzyme, chloroplastic/amyloplastic"/>
    <property type="match status" value="1"/>
</dbReference>
<dbReference type="FunFam" id="2.60.40.1180:FF:000003">
    <property type="entry name" value="1,4-alpha-glucan-branching enzyme, chloroplastic/amyloplastic"/>
    <property type="match status" value="1"/>
</dbReference>
<dbReference type="Gene3D" id="3.20.20.80">
    <property type="entry name" value="Glycosidases"/>
    <property type="match status" value="1"/>
</dbReference>
<dbReference type="Gene3D" id="2.60.40.1180">
    <property type="entry name" value="Golgi alpha-mannosidase II"/>
    <property type="match status" value="1"/>
</dbReference>
<dbReference type="Gene3D" id="2.60.40.10">
    <property type="entry name" value="Immunoglobulins"/>
    <property type="match status" value="1"/>
</dbReference>
<dbReference type="InterPro" id="IPR006048">
    <property type="entry name" value="A-amylase/branching_C"/>
</dbReference>
<dbReference type="InterPro" id="IPR037439">
    <property type="entry name" value="Branching_enzy"/>
</dbReference>
<dbReference type="InterPro" id="IPR006047">
    <property type="entry name" value="Glyco_hydro_13_cat_dom"/>
</dbReference>
<dbReference type="InterPro" id="IPR004193">
    <property type="entry name" value="Glyco_hydro_13_N"/>
</dbReference>
<dbReference type="InterPro" id="IPR013780">
    <property type="entry name" value="Glyco_hydro_b"/>
</dbReference>
<dbReference type="InterPro" id="IPR017853">
    <property type="entry name" value="Glycoside_hydrolase_SF"/>
</dbReference>
<dbReference type="InterPro" id="IPR013783">
    <property type="entry name" value="Ig-like_fold"/>
</dbReference>
<dbReference type="InterPro" id="IPR014756">
    <property type="entry name" value="Ig_E-set"/>
</dbReference>
<dbReference type="PANTHER" id="PTHR43651">
    <property type="entry name" value="1,4-ALPHA-GLUCAN-BRANCHING ENZYME"/>
    <property type="match status" value="1"/>
</dbReference>
<dbReference type="PANTHER" id="PTHR43651:SF13">
    <property type="entry name" value="1,4-ALPHA-GLUCAN-BRANCHING ENZYME 2, CHLOROPLASTIC_AMYLOPLASTIC"/>
    <property type="match status" value="1"/>
</dbReference>
<dbReference type="Pfam" id="PF00128">
    <property type="entry name" value="Alpha-amylase"/>
    <property type="match status" value="1"/>
</dbReference>
<dbReference type="Pfam" id="PF02806">
    <property type="entry name" value="Alpha-amylase_C"/>
    <property type="match status" value="1"/>
</dbReference>
<dbReference type="Pfam" id="PF02922">
    <property type="entry name" value="CBM_48"/>
    <property type="match status" value="1"/>
</dbReference>
<dbReference type="PIRSF" id="PIRSF000463">
    <property type="entry name" value="GlgB"/>
    <property type="match status" value="1"/>
</dbReference>
<dbReference type="SMART" id="SM00642">
    <property type="entry name" value="Aamy"/>
    <property type="match status" value="1"/>
</dbReference>
<dbReference type="SUPFAM" id="SSF51445">
    <property type="entry name" value="(Trans)glycosidases"/>
    <property type="match status" value="1"/>
</dbReference>
<dbReference type="SUPFAM" id="SSF81296">
    <property type="entry name" value="E set domains"/>
    <property type="match status" value="1"/>
</dbReference>
<dbReference type="SUPFAM" id="SSF51011">
    <property type="entry name" value="Glycosyl hydrolase domain"/>
    <property type="match status" value="1"/>
</dbReference>
<keyword id="KW-0035">Amyloplast</keyword>
<keyword id="KW-0150">Chloroplast</keyword>
<keyword id="KW-0903">Direct protein sequencing</keyword>
<keyword id="KW-0328">Glycosyltransferase</keyword>
<keyword id="KW-0934">Plastid</keyword>
<keyword id="KW-1185">Reference proteome</keyword>
<keyword id="KW-0750">Starch biosynthesis</keyword>
<keyword id="KW-0808">Transferase</keyword>
<keyword id="KW-0809">Transit peptide</keyword>
<proteinExistence type="evidence at protein level"/>
<sequence length="799" mass="90518">MAFRVSGAVLGGAVRAPRLTGGGEGSLVFRHTGLFLTRGARVGCSGTHGAMRAAAAARKAVMVPEGENDGLASRADSAQFQSDELEVPDISEETTCGAGVADAQALNRVRVVPPPSDGQKIFQIDPMLQGYKYHLEYRYSLYRRIRSDIDEHEGGLEAFSRSYEKFGFNASAEGITYREWAPGAFSAALVGDVNNWDPNADRMSKNEFGVWEIFLPNNADGTSPIPHGSRVKVRMDTPSGIKDSIPAWIKYSVQAPGEIPYDGIYYDPPEEVKYVFRHAQPKRPKSLRIYETHVGMSSPEPKINTYVNFRDEVLPRIKKLGYNAVQIMAIQEHSYYGSFGYHVTNFFAPSSRFGTPEDLKSLIDRAHELGLLVLMDVVHSHASSNTLDGLNGFDGTDTHYFHSGPRGHHWMWDSRLFNYGNWEVLRFLLSNARWWLEEYKFDGFRFDGVTSMMYTHHGLQVTFTGNFNEYFGFATDVDAVVYLMLVNDLIHGLYPEAVTIGEDVSGMPTFALPVHDGGVGFDYRMHMAVADKWIDLLKQSDETWKMGDIVHTLTNRRWLEKCVTYAESHDQALVGDKTIAFWLMDKDMYDFMALDRPSTPTIDRGIALHKMIRLITMGLGGEGYLNFMGNEFGHPEWIDFPRGPQRLPSGKFIPGNNNSYDKCRRRFDLGDADYLRYHGMQEFDQAMQHLEQKYEFMTSDHQYISRKHEEDKVIVFEKGDLVFVFNFHCNNSYFDYRIGCRKPGVYKVVLDSDAGLFGGFSRIHHAAEHFTADCSHDNRPYSFSVYTPSRTCVVYAPVE</sequence>
<gene>
    <name type="primary">SBE1</name>
</gene>
<accession>Q08047</accession>
<reference key="1">
    <citation type="journal article" date="1993" name="Plant Physiol.">
        <title>Starch branching enzyme II from maize endosperm.</title>
        <authorList>
            <person name="Fisher D.K."/>
            <person name="Boyer C.D."/>
            <person name="Hannah L.C."/>
        </authorList>
    </citation>
    <scope>NUCLEOTIDE SEQUENCE [MRNA]</scope>
    <scope>PROTEIN SEQUENCE OF 58-65</scope>
    <source>
        <strain>cv. W64A X 182E</strain>
        <tissue>Endosperm</tissue>
    </source>
</reference>
<reference key="2">
    <citation type="journal article" date="1994" name="Cell. Mol. Biol.">
        <title>Expression of branching enzyme II of maize endosperm in Escherichia coli.</title>
        <authorList>
            <person name="Guan H.P."/>
            <person name="Baba T."/>
            <person name="Preiss J."/>
        </authorList>
    </citation>
    <scope>NUCLEOTIDE SEQUENCE [MRNA]</scope>
    <scope>PROTEIN SEQUENCE OF 248-271 AND 305-315</scope>
    <source>
        <strain>cv. B73</strain>
        <tissue>Endosperm</tissue>
    </source>
</reference>
<name>GLGB_MAIZE</name>
<feature type="transit peptide" description="Chloroplast" evidence="4">
    <location>
        <begin position="1"/>
        <end position="57"/>
    </location>
</feature>
<feature type="chain" id="PRO_0000011147" description="1,4-alpha-glucan-branching enzyme 2, chloroplastic/amyloplastic">
    <location>
        <begin position="58"/>
        <end position="799"/>
    </location>
</feature>
<feature type="active site" description="Nucleophile" evidence="2">
    <location>
        <position position="447"/>
    </location>
</feature>
<feature type="active site" description="Proton donor" evidence="2">
    <location>
        <position position="502"/>
    </location>
</feature>
<feature type="binding site" evidence="3">
    <location>
        <position position="196"/>
    </location>
    <ligand>
        <name>(1,4-alpha-D-glucosyl)n</name>
        <dbReference type="ChEBI" id="CHEBI:15444"/>
    </ligand>
</feature>
<feature type="binding site" evidence="3">
    <location>
        <position position="232"/>
    </location>
    <ligand>
        <name>(1,4-alpha-D-glucosyl)n</name>
        <dbReference type="ChEBI" id="CHEBI:15444"/>
    </ligand>
</feature>
<feature type="site" description="Transition state stabilizer" evidence="2">
    <location>
        <position position="570"/>
    </location>
</feature>
<comment type="function">
    <text>Catalyzes the formation of the alpha-1,6-glucosidic linkages in starch by scission of a 1,4-alpha-linked oligosaccharide from growing alpha-1,4-glucan chains and the subsequent attachment of the oligosaccharide to the alpha-1,6 position.</text>
</comment>
<comment type="catalytic activity">
    <reaction evidence="2">
        <text>Transfers a segment of a (1-&gt;4)-alpha-D-glucan chain to a primary hydroxy group in a similar glucan chain.</text>
        <dbReference type="EC" id="2.4.1.18"/>
    </reaction>
</comment>
<comment type="pathway">
    <text>Glycan biosynthesis; starch biosynthesis.</text>
</comment>
<comment type="subunit">
    <text evidence="1">Monomer.</text>
</comment>
<comment type="subcellular location">
    <subcellularLocation>
        <location>Plastid</location>
        <location>Chloroplast</location>
    </subcellularLocation>
    <subcellularLocation>
        <location>Plastid</location>
        <location>Amyloplast</location>
    </subcellularLocation>
</comment>
<comment type="similarity">
    <text evidence="5">Belongs to the glycosyl hydrolase 13 family. GlgB subfamily.</text>
</comment>
<organism>
    <name type="scientific">Zea mays</name>
    <name type="common">Maize</name>
    <dbReference type="NCBI Taxonomy" id="4577"/>
    <lineage>
        <taxon>Eukaryota</taxon>
        <taxon>Viridiplantae</taxon>
        <taxon>Streptophyta</taxon>
        <taxon>Embryophyta</taxon>
        <taxon>Tracheophyta</taxon>
        <taxon>Spermatophyta</taxon>
        <taxon>Magnoliopsida</taxon>
        <taxon>Liliopsida</taxon>
        <taxon>Poales</taxon>
        <taxon>Poaceae</taxon>
        <taxon>PACMAD clade</taxon>
        <taxon>Panicoideae</taxon>
        <taxon>Andropogonodae</taxon>
        <taxon>Andropogoneae</taxon>
        <taxon>Tripsacinae</taxon>
        <taxon>Zea</taxon>
    </lineage>
</organism>
<evidence type="ECO:0000250" key="1"/>
<evidence type="ECO:0000250" key="2">
    <source>
        <dbReference type="UniProtKB" id="Q04446"/>
    </source>
</evidence>
<evidence type="ECO:0000250" key="3">
    <source>
        <dbReference type="UniProtKB" id="Q6FJV0"/>
    </source>
</evidence>
<evidence type="ECO:0000269" key="4">
    <source>
    </source>
</evidence>
<evidence type="ECO:0000305" key="5"/>
<protein>
    <recommendedName>
        <fullName>1,4-alpha-glucan-branching enzyme 2, chloroplastic/amyloplastic</fullName>
        <ecNumber evidence="2">2.4.1.18</ecNumber>
    </recommendedName>
    <alternativeName>
        <fullName>Q-enzyme</fullName>
    </alternativeName>
    <alternativeName>
        <fullName>Starch-branching enzyme IIB</fullName>
    </alternativeName>
</protein>